<gene>
    <name type="primary">RBM6</name>
    <name type="synonym">DEF3</name>
</gene>
<organism>
    <name type="scientific">Homo sapiens</name>
    <name type="common">Human</name>
    <dbReference type="NCBI Taxonomy" id="9606"/>
    <lineage>
        <taxon>Eukaryota</taxon>
        <taxon>Metazoa</taxon>
        <taxon>Chordata</taxon>
        <taxon>Craniata</taxon>
        <taxon>Vertebrata</taxon>
        <taxon>Euteleostomi</taxon>
        <taxon>Mammalia</taxon>
        <taxon>Eutheria</taxon>
        <taxon>Euarchontoglires</taxon>
        <taxon>Primates</taxon>
        <taxon>Haplorrhini</taxon>
        <taxon>Catarrhini</taxon>
        <taxon>Hominidae</taxon>
        <taxon>Homo</taxon>
    </lineage>
</organism>
<accession>P78332</accession>
<accession>B4E0G6</accession>
<accession>O60549</accession>
<accession>O75524</accession>
<accession>Q86SS3</accession>
<reference key="1">
    <citation type="journal article" date="1998" name="Cancer Res.">
        <title>Human lung cancer antigens recognized by autologous antibodies: definition of a novel cDNA derived from the tumor suppressor gene locus on chromosome 3p21.3.</title>
        <authorList>
            <person name="Gure A.O."/>
            <person name="Altorki N.K."/>
            <person name="Stockert E."/>
            <person name="Scanlan M.J."/>
            <person name="Old L.J."/>
            <person name="Chen Y.-T."/>
        </authorList>
    </citation>
    <scope>NUCLEOTIDE SEQUENCE [MRNA] (ISOFORM 1)</scope>
    <source>
        <tissue>Lung</tissue>
    </source>
</reference>
<reference key="2">
    <citation type="journal article" date="1999" name="Eur. J. Hum. Genet.">
        <title>A comparison of genomic structures and expression patterns of two closely related flanking genes in a critical lung cancer region at 3p21.3.</title>
        <authorList>
            <person name="Timmer T."/>
            <person name="Terpstra P."/>
            <person name="van den Berg A."/>
            <person name="Veldhuis P.M."/>
            <person name="Ter Elst A."/>
            <person name="Voutsinas G."/>
            <person name="Hulsbeek M.M.F."/>
            <person name="Draaijers T.G."/>
            <person name="Looman M.W.G."/>
            <person name="Kok K."/>
            <person name="Naylor S.L."/>
            <person name="Buys C.H.C.M."/>
        </authorList>
    </citation>
    <scope>NUCLEOTIDE SEQUENCE [MRNA] (ISOFORM 1)</scope>
</reference>
<reference key="3">
    <citation type="journal article" date="1999" name="Oncogene">
        <title>DEF-3(g16/NY-LU-12), an RNA binding protein from the 3p21.3 homozygous deletion region in SCLC.</title>
        <authorList>
            <person name="Drabkin H.A."/>
            <person name="West J.D."/>
            <person name="Hotfilder M."/>
            <person name="Heng Y.M."/>
            <person name="Erickson P."/>
            <person name="Calvo R."/>
            <person name="Dalmau J."/>
            <person name="Gemmill R.M."/>
            <person name="Sablitzky F."/>
        </authorList>
    </citation>
    <scope>NUCLEOTIDE SEQUENCE [MRNA] (ISOFORM 1)</scope>
</reference>
<reference key="4">
    <citation type="submission" date="1998-09" db="EMBL/GenBank/DDBJ databases">
        <title>A highly conserved and universally expressed gene is interrupted by a homozygous deletion in a small cell lung cancer cell line NCI-H740.</title>
        <authorList>
            <person name="Latif F."/>
            <person name="Duh F.-M."/>
            <person name="Wei M.H."/>
            <person name="Sekido Y."/>
            <person name="Forgacs E."/>
            <person name="Minna J.D."/>
            <person name="Lerman M.I."/>
        </authorList>
    </citation>
    <scope>NUCLEOTIDE SEQUENCE [MRNA] (ISOFORM 1)</scope>
</reference>
<reference key="5">
    <citation type="journal article" date="2004" name="Nat. Genet.">
        <title>Complete sequencing and characterization of 21,243 full-length human cDNAs.</title>
        <authorList>
            <person name="Ota T."/>
            <person name="Suzuki Y."/>
            <person name="Nishikawa T."/>
            <person name="Otsuki T."/>
            <person name="Sugiyama T."/>
            <person name="Irie R."/>
            <person name="Wakamatsu A."/>
            <person name="Hayashi K."/>
            <person name="Sato H."/>
            <person name="Nagai K."/>
            <person name="Kimura K."/>
            <person name="Makita H."/>
            <person name="Sekine M."/>
            <person name="Obayashi M."/>
            <person name="Nishi T."/>
            <person name="Shibahara T."/>
            <person name="Tanaka T."/>
            <person name="Ishii S."/>
            <person name="Yamamoto J."/>
            <person name="Saito K."/>
            <person name="Kawai Y."/>
            <person name="Isono Y."/>
            <person name="Nakamura Y."/>
            <person name="Nagahari K."/>
            <person name="Murakami K."/>
            <person name="Yasuda T."/>
            <person name="Iwayanagi T."/>
            <person name="Wagatsuma M."/>
            <person name="Shiratori A."/>
            <person name="Sudo H."/>
            <person name="Hosoiri T."/>
            <person name="Kaku Y."/>
            <person name="Kodaira H."/>
            <person name="Kondo H."/>
            <person name="Sugawara M."/>
            <person name="Takahashi M."/>
            <person name="Kanda K."/>
            <person name="Yokoi T."/>
            <person name="Furuya T."/>
            <person name="Kikkawa E."/>
            <person name="Omura Y."/>
            <person name="Abe K."/>
            <person name="Kamihara K."/>
            <person name="Katsuta N."/>
            <person name="Sato K."/>
            <person name="Tanikawa M."/>
            <person name="Yamazaki M."/>
            <person name="Ninomiya K."/>
            <person name="Ishibashi T."/>
            <person name="Yamashita H."/>
            <person name="Murakawa K."/>
            <person name="Fujimori K."/>
            <person name="Tanai H."/>
            <person name="Kimata M."/>
            <person name="Watanabe M."/>
            <person name="Hiraoka S."/>
            <person name="Chiba Y."/>
            <person name="Ishida S."/>
            <person name="Ono Y."/>
            <person name="Takiguchi S."/>
            <person name="Watanabe S."/>
            <person name="Yosida M."/>
            <person name="Hotuta T."/>
            <person name="Kusano J."/>
            <person name="Kanehori K."/>
            <person name="Takahashi-Fujii A."/>
            <person name="Hara H."/>
            <person name="Tanase T.-O."/>
            <person name="Nomura Y."/>
            <person name="Togiya S."/>
            <person name="Komai F."/>
            <person name="Hara R."/>
            <person name="Takeuchi K."/>
            <person name="Arita M."/>
            <person name="Imose N."/>
            <person name="Musashino K."/>
            <person name="Yuuki H."/>
            <person name="Oshima A."/>
            <person name="Sasaki N."/>
            <person name="Aotsuka S."/>
            <person name="Yoshikawa Y."/>
            <person name="Matsunawa H."/>
            <person name="Ichihara T."/>
            <person name="Shiohata N."/>
            <person name="Sano S."/>
            <person name="Moriya S."/>
            <person name="Momiyama H."/>
            <person name="Satoh N."/>
            <person name="Takami S."/>
            <person name="Terashima Y."/>
            <person name="Suzuki O."/>
            <person name="Nakagawa S."/>
            <person name="Senoh A."/>
            <person name="Mizoguchi H."/>
            <person name="Goto Y."/>
            <person name="Shimizu F."/>
            <person name="Wakebe H."/>
            <person name="Hishigaki H."/>
            <person name="Watanabe T."/>
            <person name="Sugiyama A."/>
            <person name="Takemoto M."/>
            <person name="Kawakami B."/>
            <person name="Yamazaki M."/>
            <person name="Watanabe K."/>
            <person name="Kumagai A."/>
            <person name="Itakura S."/>
            <person name="Fukuzumi Y."/>
            <person name="Fujimori Y."/>
            <person name="Komiyama M."/>
            <person name="Tashiro H."/>
            <person name="Tanigami A."/>
            <person name="Fujiwara T."/>
            <person name="Ono T."/>
            <person name="Yamada K."/>
            <person name="Fujii Y."/>
            <person name="Ozaki K."/>
            <person name="Hirao M."/>
            <person name="Ohmori Y."/>
            <person name="Kawabata A."/>
            <person name="Hikiji T."/>
            <person name="Kobatake N."/>
            <person name="Inagaki H."/>
            <person name="Ikema Y."/>
            <person name="Okamoto S."/>
            <person name="Okitani R."/>
            <person name="Kawakami T."/>
            <person name="Noguchi S."/>
            <person name="Itoh T."/>
            <person name="Shigeta K."/>
            <person name="Senba T."/>
            <person name="Matsumura K."/>
            <person name="Nakajima Y."/>
            <person name="Mizuno T."/>
            <person name="Morinaga M."/>
            <person name="Sasaki M."/>
            <person name="Togashi T."/>
            <person name="Oyama M."/>
            <person name="Hata H."/>
            <person name="Watanabe M."/>
            <person name="Komatsu T."/>
            <person name="Mizushima-Sugano J."/>
            <person name="Satoh T."/>
            <person name="Shirai Y."/>
            <person name="Takahashi Y."/>
            <person name="Nakagawa K."/>
            <person name="Okumura K."/>
            <person name="Nagase T."/>
            <person name="Nomura N."/>
            <person name="Kikuchi H."/>
            <person name="Masuho Y."/>
            <person name="Yamashita R."/>
            <person name="Nakai K."/>
            <person name="Yada T."/>
            <person name="Nakamura Y."/>
            <person name="Ohara O."/>
            <person name="Isogai T."/>
            <person name="Sugano S."/>
        </authorList>
    </citation>
    <scope>NUCLEOTIDE SEQUENCE [LARGE SCALE MRNA] (ISOFORM 3)</scope>
    <source>
        <tissue>Thymus</tissue>
    </source>
</reference>
<reference key="6">
    <citation type="journal article" date="2006" name="Nature">
        <title>The DNA sequence, annotation and analysis of human chromosome 3.</title>
        <authorList>
            <person name="Muzny D.M."/>
            <person name="Scherer S.E."/>
            <person name="Kaul R."/>
            <person name="Wang J."/>
            <person name="Yu J."/>
            <person name="Sudbrak R."/>
            <person name="Buhay C.J."/>
            <person name="Chen R."/>
            <person name="Cree A."/>
            <person name="Ding Y."/>
            <person name="Dugan-Rocha S."/>
            <person name="Gill R."/>
            <person name="Gunaratne P."/>
            <person name="Harris R.A."/>
            <person name="Hawes A.C."/>
            <person name="Hernandez J."/>
            <person name="Hodgson A.V."/>
            <person name="Hume J."/>
            <person name="Jackson A."/>
            <person name="Khan Z.M."/>
            <person name="Kovar-Smith C."/>
            <person name="Lewis L.R."/>
            <person name="Lozado R.J."/>
            <person name="Metzker M.L."/>
            <person name="Milosavljevic A."/>
            <person name="Miner G.R."/>
            <person name="Morgan M.B."/>
            <person name="Nazareth L.V."/>
            <person name="Scott G."/>
            <person name="Sodergren E."/>
            <person name="Song X.-Z."/>
            <person name="Steffen D."/>
            <person name="Wei S."/>
            <person name="Wheeler D.A."/>
            <person name="Wright M.W."/>
            <person name="Worley K.C."/>
            <person name="Yuan Y."/>
            <person name="Zhang Z."/>
            <person name="Adams C.Q."/>
            <person name="Ansari-Lari M.A."/>
            <person name="Ayele M."/>
            <person name="Brown M.J."/>
            <person name="Chen G."/>
            <person name="Chen Z."/>
            <person name="Clendenning J."/>
            <person name="Clerc-Blankenburg K.P."/>
            <person name="Chen R."/>
            <person name="Chen Z."/>
            <person name="Davis C."/>
            <person name="Delgado O."/>
            <person name="Dinh H.H."/>
            <person name="Dong W."/>
            <person name="Draper H."/>
            <person name="Ernst S."/>
            <person name="Fu G."/>
            <person name="Gonzalez-Garay M.L."/>
            <person name="Garcia D.K."/>
            <person name="Gillett W."/>
            <person name="Gu J."/>
            <person name="Hao B."/>
            <person name="Haugen E."/>
            <person name="Havlak P."/>
            <person name="He X."/>
            <person name="Hennig S."/>
            <person name="Hu S."/>
            <person name="Huang W."/>
            <person name="Jackson L.R."/>
            <person name="Jacob L.S."/>
            <person name="Kelly S.H."/>
            <person name="Kube M."/>
            <person name="Levy R."/>
            <person name="Li Z."/>
            <person name="Liu B."/>
            <person name="Liu J."/>
            <person name="Liu W."/>
            <person name="Lu J."/>
            <person name="Maheshwari M."/>
            <person name="Nguyen B.-V."/>
            <person name="Okwuonu G.O."/>
            <person name="Palmeiri A."/>
            <person name="Pasternak S."/>
            <person name="Perez L.M."/>
            <person name="Phelps K.A."/>
            <person name="Plopper F.J."/>
            <person name="Qiang B."/>
            <person name="Raymond C."/>
            <person name="Rodriguez R."/>
            <person name="Saenphimmachak C."/>
            <person name="Santibanez J."/>
            <person name="Shen H."/>
            <person name="Shen Y."/>
            <person name="Subramanian S."/>
            <person name="Tabor P.E."/>
            <person name="Verduzco D."/>
            <person name="Waldron L."/>
            <person name="Wang J."/>
            <person name="Wang J."/>
            <person name="Wang Q."/>
            <person name="Williams G.A."/>
            <person name="Wong G.K.-S."/>
            <person name="Yao Z."/>
            <person name="Zhang J."/>
            <person name="Zhang X."/>
            <person name="Zhao G."/>
            <person name="Zhou J."/>
            <person name="Zhou Y."/>
            <person name="Nelson D."/>
            <person name="Lehrach H."/>
            <person name="Reinhardt R."/>
            <person name="Naylor S.L."/>
            <person name="Yang H."/>
            <person name="Olson M."/>
            <person name="Weinstock G."/>
            <person name="Gibbs R.A."/>
        </authorList>
    </citation>
    <scope>NUCLEOTIDE SEQUENCE [LARGE SCALE GENOMIC DNA]</scope>
</reference>
<reference key="7">
    <citation type="journal article" date="2004" name="Genome Res.">
        <title>The status, quality, and expansion of the NIH full-length cDNA project: the Mammalian Gene Collection (MGC).</title>
        <authorList>
            <consortium name="The MGC Project Team"/>
        </authorList>
    </citation>
    <scope>NUCLEOTIDE SEQUENCE [LARGE SCALE MRNA] (ISOFORM 2)</scope>
    <source>
        <tissue>Brain</tissue>
    </source>
</reference>
<reference key="8">
    <citation type="journal article" date="2000" name="Cancer Res.">
        <title>The 630-kb lung cancer homozygous deletion region on human chromosome 3p21.3: identification and evaluation of the resident candidate tumor suppressor genes.</title>
        <authorList>
            <consortium name="The international lung cancer chromosome 3p21.3 tumor suppressor gene consortium"/>
            <person name="Lerman M.I."/>
            <person name="Minna J.D."/>
        </authorList>
    </citation>
    <scope>DISCUSSION OF SEQUENCE</scope>
    <scope>VARIANT PHE-353</scope>
</reference>
<reference key="9">
    <citation type="journal article" date="2006" name="Cell">
        <title>Global, in vivo, and site-specific phosphorylation dynamics in signaling networks.</title>
        <authorList>
            <person name="Olsen J.V."/>
            <person name="Blagoev B."/>
            <person name="Gnad F."/>
            <person name="Macek B."/>
            <person name="Kumar C."/>
            <person name="Mortensen P."/>
            <person name="Mann M."/>
        </authorList>
    </citation>
    <scope>PHOSPHORYLATION [LARGE SCALE ANALYSIS] AT SER-1025</scope>
    <scope>IDENTIFICATION BY MASS SPECTROMETRY [LARGE SCALE ANALYSIS]</scope>
    <source>
        <tissue>Cervix carcinoma</tissue>
    </source>
</reference>
<reference key="10">
    <citation type="journal article" date="2007" name="Science">
        <title>ATM and ATR substrate analysis reveals extensive protein networks responsive to DNA damage.</title>
        <authorList>
            <person name="Matsuoka S."/>
            <person name="Ballif B.A."/>
            <person name="Smogorzewska A."/>
            <person name="McDonald E.R. III"/>
            <person name="Hurov K.E."/>
            <person name="Luo J."/>
            <person name="Bakalarski C.E."/>
            <person name="Zhao Z."/>
            <person name="Solimini N."/>
            <person name="Lerenthal Y."/>
            <person name="Shiloh Y."/>
            <person name="Gygi S.P."/>
            <person name="Elledge S.J."/>
        </authorList>
    </citation>
    <scope>PHOSPHORYLATION [LARGE SCALE ANALYSIS] AT SER-360 AND SER-362</scope>
    <scope>IDENTIFICATION BY MASS SPECTROMETRY [LARGE SCALE ANALYSIS]</scope>
    <source>
        <tissue>Embryonic kidney</tissue>
    </source>
</reference>
<reference key="11">
    <citation type="journal article" date="2008" name="Mol. Cell">
        <title>Kinase-selective enrichment enables quantitative phosphoproteomics of the kinome across the cell cycle.</title>
        <authorList>
            <person name="Daub H."/>
            <person name="Olsen J.V."/>
            <person name="Bairlein M."/>
            <person name="Gnad F."/>
            <person name="Oppermann F.S."/>
            <person name="Korner R."/>
            <person name="Greff Z."/>
            <person name="Keri G."/>
            <person name="Stemmann O."/>
            <person name="Mann M."/>
        </authorList>
    </citation>
    <scope>PHOSPHORYLATION [LARGE SCALE ANALYSIS] AT SER-1025</scope>
    <scope>IDENTIFICATION BY MASS SPECTROMETRY [LARGE SCALE ANALYSIS]</scope>
    <source>
        <tissue>Cervix carcinoma</tissue>
    </source>
</reference>
<reference key="12">
    <citation type="journal article" date="2008" name="Proc. Natl. Acad. Sci. U.S.A.">
        <title>A quantitative atlas of mitotic phosphorylation.</title>
        <authorList>
            <person name="Dephoure N."/>
            <person name="Zhou C."/>
            <person name="Villen J."/>
            <person name="Beausoleil S.A."/>
            <person name="Bakalarski C.E."/>
            <person name="Elledge S.J."/>
            <person name="Gygi S.P."/>
        </authorList>
    </citation>
    <scope>PHOSPHORYLATION [LARGE SCALE ANALYSIS] AT SER-360; SER-362 AND SER-1025</scope>
    <scope>IDENTIFICATION BY MASS SPECTROMETRY [LARGE SCALE ANALYSIS]</scope>
    <source>
        <tissue>Cervix carcinoma</tissue>
    </source>
</reference>
<reference key="13">
    <citation type="journal article" date="2009" name="Mol. Cell. Proteomics">
        <title>Large-scale proteomics analysis of the human kinome.</title>
        <authorList>
            <person name="Oppermann F.S."/>
            <person name="Gnad F."/>
            <person name="Olsen J.V."/>
            <person name="Hornberger R."/>
            <person name="Greff Z."/>
            <person name="Keri G."/>
            <person name="Mann M."/>
            <person name="Daub H."/>
        </authorList>
    </citation>
    <scope>IDENTIFICATION BY MASS SPECTROMETRY [LARGE SCALE ANALYSIS]</scope>
</reference>
<reference key="14">
    <citation type="journal article" date="2009" name="Sci. Signal.">
        <title>Quantitative phosphoproteomic analysis of T cell receptor signaling reveals system-wide modulation of protein-protein interactions.</title>
        <authorList>
            <person name="Mayya V."/>
            <person name="Lundgren D.H."/>
            <person name="Hwang S.-I."/>
            <person name="Rezaul K."/>
            <person name="Wu L."/>
            <person name="Eng J.K."/>
            <person name="Rodionov V."/>
            <person name="Han D.K."/>
        </authorList>
    </citation>
    <scope>PHOSPHORYLATION [LARGE SCALE ANALYSIS] AT SER-360 AND SER-362</scope>
    <scope>IDENTIFICATION BY MASS SPECTROMETRY [LARGE SCALE ANALYSIS]</scope>
    <source>
        <tissue>Leukemic T-cell</tissue>
    </source>
</reference>
<reference key="15">
    <citation type="journal article" date="2010" name="Sci. Signal.">
        <title>Quantitative phosphoproteomics reveals widespread full phosphorylation site occupancy during mitosis.</title>
        <authorList>
            <person name="Olsen J.V."/>
            <person name="Vermeulen M."/>
            <person name="Santamaria A."/>
            <person name="Kumar C."/>
            <person name="Miller M.L."/>
            <person name="Jensen L.J."/>
            <person name="Gnad F."/>
            <person name="Cox J."/>
            <person name="Jensen T.S."/>
            <person name="Nigg E.A."/>
            <person name="Brunak S."/>
            <person name="Mann M."/>
        </authorList>
    </citation>
    <scope>PHOSPHORYLATION [LARGE SCALE ANALYSIS] AT SER-891 AND SER-1025</scope>
    <scope>IDENTIFICATION BY MASS SPECTROMETRY [LARGE SCALE ANALYSIS]</scope>
    <source>
        <tissue>Cervix carcinoma</tissue>
    </source>
</reference>
<reference key="16">
    <citation type="journal article" date="2011" name="J. Cell. Mol. Med.">
        <title>The novel protein MANI modulates neurogenesis and neurite-cone growth.</title>
        <authorList>
            <person name="Mishra M."/>
            <person name="Akatsu H."/>
            <person name="Heese K."/>
        </authorList>
    </citation>
    <scope>INTERACTION WITH FAM168B</scope>
</reference>
<reference key="17">
    <citation type="journal article" date="2011" name="Sci. Signal.">
        <title>System-wide temporal characterization of the proteome and phosphoproteome of human embryonic stem cell differentiation.</title>
        <authorList>
            <person name="Rigbolt K.T."/>
            <person name="Prokhorova T.A."/>
            <person name="Akimov V."/>
            <person name="Henningsen J."/>
            <person name="Johansen P.T."/>
            <person name="Kratchmarova I."/>
            <person name="Kassem M."/>
            <person name="Mann M."/>
            <person name="Olsen J.V."/>
            <person name="Blagoev B."/>
        </authorList>
    </citation>
    <scope>IDENTIFICATION BY MASS SPECTROMETRY [LARGE SCALE ANALYSIS]</scope>
</reference>
<reference key="18">
    <citation type="journal article" date="2013" name="J. Proteome Res.">
        <title>Toward a comprehensive characterization of a human cancer cell phosphoproteome.</title>
        <authorList>
            <person name="Zhou H."/>
            <person name="Di Palma S."/>
            <person name="Preisinger C."/>
            <person name="Peng M."/>
            <person name="Polat A.N."/>
            <person name="Heck A.J."/>
            <person name="Mohammed S."/>
        </authorList>
    </citation>
    <scope>PHOSPHORYLATION [LARGE SCALE ANALYSIS] AT SER-17; SER-240; THR-344; SER-360; SER-362; SER-1022 AND SER-1025</scope>
    <scope>IDENTIFICATION BY MASS SPECTROMETRY [LARGE SCALE ANALYSIS]</scope>
    <source>
        <tissue>Cervix carcinoma</tissue>
        <tissue>Erythroleukemia</tissue>
    </source>
</reference>
<reference key="19">
    <citation type="journal article" date="2014" name="J. Proteomics">
        <title>An enzyme assisted RP-RPLC approach for in-depth analysis of human liver phosphoproteome.</title>
        <authorList>
            <person name="Bian Y."/>
            <person name="Song C."/>
            <person name="Cheng K."/>
            <person name="Dong M."/>
            <person name="Wang F."/>
            <person name="Huang J."/>
            <person name="Sun D."/>
            <person name="Wang L."/>
            <person name="Ye M."/>
            <person name="Zou H."/>
        </authorList>
    </citation>
    <scope>PHOSPHORYLATION [LARGE SCALE ANALYSIS] AT SER-360; SER-362; SER-891 AND SER-1025</scope>
    <scope>IDENTIFICATION BY MASS SPECTROMETRY [LARGE SCALE ANALYSIS]</scope>
    <source>
        <tissue>Liver</tissue>
    </source>
</reference>
<reference key="20">
    <citation type="journal article" date="2014" name="Nat. Struct. Mol. Biol.">
        <title>Uncovering global SUMOylation signaling networks in a site-specific manner.</title>
        <authorList>
            <person name="Hendriks I.A."/>
            <person name="D'Souza R.C."/>
            <person name="Yang B."/>
            <person name="Verlaan-de Vries M."/>
            <person name="Mann M."/>
            <person name="Vertegaal A.C."/>
        </authorList>
    </citation>
    <scope>SUMOYLATION [LARGE SCALE ANALYSIS] AT LYS-386; LYS-453; LYS-569 AND LYS-1046</scope>
    <scope>IDENTIFICATION BY MASS SPECTROMETRY [LARGE SCALE ANALYSIS]</scope>
</reference>
<reference key="21">
    <citation type="journal article" date="2015" name="Cell Rep.">
        <title>SUMO-2 orchestrates chromatin modifiers in response to DNA damage.</title>
        <authorList>
            <person name="Hendriks I.A."/>
            <person name="Treffers L.W."/>
            <person name="Verlaan-de Vries M."/>
            <person name="Olsen J.V."/>
            <person name="Vertegaal A.C."/>
        </authorList>
    </citation>
    <scope>SUMOYLATION [LARGE SCALE ANALYSIS] AT LYS-453 AND LYS-569</scope>
    <scope>IDENTIFICATION BY MASS SPECTROMETRY [LARGE SCALE ANALYSIS]</scope>
</reference>
<reference key="22">
    <citation type="journal article" date="2015" name="Mol. Cell. Proteomics">
        <title>System-wide analysis of SUMOylation dynamics in response to replication stress reveals novel small ubiquitin-like modified target proteins and acceptor lysines relevant for genome stability.</title>
        <authorList>
            <person name="Xiao Z."/>
            <person name="Chang J.G."/>
            <person name="Hendriks I.A."/>
            <person name="Sigurdsson J.O."/>
            <person name="Olsen J.V."/>
            <person name="Vertegaal A.C."/>
        </authorList>
    </citation>
    <scope>SUMOYLATION [LARGE SCALE ANALYSIS] AT LYS-453 AND LYS-569</scope>
    <scope>IDENTIFICATION BY MASS SPECTROMETRY [LARGE SCALE ANALYSIS]</scope>
</reference>
<reference key="23">
    <citation type="journal article" date="2017" name="Nat. Struct. Mol. Biol.">
        <title>Site-specific mapping of the human SUMO proteome reveals co-modification with phosphorylation.</title>
        <authorList>
            <person name="Hendriks I.A."/>
            <person name="Lyon D."/>
            <person name="Young C."/>
            <person name="Jensen L.J."/>
            <person name="Vertegaal A.C."/>
            <person name="Nielsen M.L."/>
        </authorList>
    </citation>
    <scope>SUMOYLATION [LARGE SCALE ANALYSIS] AT LYS-36; LYS-331; LYS-386; LYS-453; LYS-469; LYS-569; LYS-871; LYS-879; LYS-887; LYS-935; LYS-948; LYS-991; LYS-1019; LYS-1042; LYS-1046 AND LYS-1066</scope>
    <scope>IDENTIFICATION BY MASS SPECTROMETRY [LARGE SCALE ANALYSIS]</scope>
</reference>
<feature type="chain" id="PRO_0000081760" description="RNA-binding protein 6">
    <location>
        <begin position="1"/>
        <end position="1123"/>
    </location>
</feature>
<feature type="domain" description="RRM" evidence="2">
    <location>
        <begin position="456"/>
        <end position="536"/>
    </location>
</feature>
<feature type="domain" description="G-patch" evidence="1">
    <location>
        <begin position="1051"/>
        <end position="1097"/>
    </location>
</feature>
<feature type="region of interest" description="Disordered" evidence="3">
    <location>
        <begin position="1"/>
        <end position="391"/>
    </location>
</feature>
<feature type="region of interest" description="Disordered" evidence="3">
    <location>
        <begin position="413"/>
        <end position="454"/>
    </location>
</feature>
<feature type="region of interest" description="Disordered" evidence="3">
    <location>
        <begin position="574"/>
        <end position="654"/>
    </location>
</feature>
<feature type="region of interest" description="Disordered" evidence="3">
    <location>
        <begin position="741"/>
        <end position="787"/>
    </location>
</feature>
<feature type="region of interest" description="Disordered" evidence="3">
    <location>
        <begin position="827"/>
        <end position="948"/>
    </location>
</feature>
<feature type="region of interest" description="Disordered" evidence="3">
    <location>
        <begin position="1004"/>
        <end position="1106"/>
    </location>
</feature>
<feature type="compositionally biased region" description="Basic and acidic residues" evidence="3">
    <location>
        <begin position="79"/>
        <end position="97"/>
    </location>
</feature>
<feature type="compositionally biased region" description="Low complexity" evidence="3">
    <location>
        <begin position="98"/>
        <end position="114"/>
    </location>
</feature>
<feature type="compositionally biased region" description="Basic and acidic residues" evidence="3">
    <location>
        <begin position="115"/>
        <end position="131"/>
    </location>
</feature>
<feature type="compositionally biased region" description="Basic and acidic residues" evidence="3">
    <location>
        <begin position="145"/>
        <end position="237"/>
    </location>
</feature>
<feature type="compositionally biased region" description="Basic and acidic residues" evidence="3">
    <location>
        <begin position="245"/>
        <end position="286"/>
    </location>
</feature>
<feature type="compositionally biased region" description="Basic and acidic residues" evidence="3">
    <location>
        <begin position="301"/>
        <end position="323"/>
    </location>
</feature>
<feature type="compositionally biased region" description="Basic and acidic residues" evidence="3">
    <location>
        <begin position="332"/>
        <end position="354"/>
    </location>
</feature>
<feature type="compositionally biased region" description="Polar residues" evidence="3">
    <location>
        <begin position="356"/>
        <end position="365"/>
    </location>
</feature>
<feature type="compositionally biased region" description="Basic and acidic residues" evidence="3">
    <location>
        <begin position="366"/>
        <end position="391"/>
    </location>
</feature>
<feature type="compositionally biased region" description="Basic and acidic residues" evidence="3">
    <location>
        <begin position="431"/>
        <end position="454"/>
    </location>
</feature>
<feature type="compositionally biased region" description="Basic and acidic residues" evidence="3">
    <location>
        <begin position="597"/>
        <end position="654"/>
    </location>
</feature>
<feature type="compositionally biased region" description="Basic and acidic residues" evidence="3">
    <location>
        <begin position="742"/>
        <end position="754"/>
    </location>
</feature>
<feature type="compositionally biased region" description="Polar residues" evidence="3">
    <location>
        <begin position="772"/>
        <end position="787"/>
    </location>
</feature>
<feature type="compositionally biased region" description="Basic and acidic residues" evidence="3">
    <location>
        <begin position="843"/>
        <end position="860"/>
    </location>
</feature>
<feature type="compositionally biased region" description="Acidic residues" evidence="3">
    <location>
        <begin position="910"/>
        <end position="922"/>
    </location>
</feature>
<feature type="compositionally biased region" description="Basic and acidic residues" evidence="3">
    <location>
        <begin position="934"/>
        <end position="948"/>
    </location>
</feature>
<feature type="compositionally biased region" description="Basic and acidic residues" evidence="3">
    <location>
        <begin position="1004"/>
        <end position="1051"/>
    </location>
</feature>
<feature type="modified residue" description="Phosphoserine" evidence="14">
    <location>
        <position position="17"/>
    </location>
</feature>
<feature type="modified residue" description="Phosphoserine" evidence="14">
    <location>
        <position position="240"/>
    </location>
</feature>
<feature type="modified residue" description="Phosphothreonine" evidence="14">
    <location>
        <position position="344"/>
    </location>
</feature>
<feature type="modified residue" description="Phosphoserine" evidence="9 10 12 14 15">
    <location>
        <position position="360"/>
    </location>
</feature>
<feature type="modified residue" description="Phosphoserine" evidence="9 10 12 14 15">
    <location>
        <position position="362"/>
    </location>
</feature>
<feature type="modified residue" description="Phosphoserine" evidence="13 15">
    <location>
        <position position="891"/>
    </location>
</feature>
<feature type="modified residue" description="Phosphoserine" evidence="14">
    <location>
        <position position="1022"/>
    </location>
</feature>
<feature type="modified residue" description="Phosphoserine" evidence="8 10 11 13 14 15">
    <location>
        <position position="1025"/>
    </location>
</feature>
<feature type="cross-link" description="Glycyl lysine isopeptide (Lys-Gly) (interchain with G-Cter in SUMO2)" evidence="19">
    <location>
        <position position="36"/>
    </location>
</feature>
<feature type="cross-link" description="Glycyl lysine isopeptide (Lys-Gly) (interchain with G-Cter in SUMO2)" evidence="19">
    <location>
        <position position="331"/>
    </location>
</feature>
<feature type="cross-link" description="Glycyl lysine isopeptide (Lys-Gly) (interchain with G-Cter in SUMO2)" evidence="16 19">
    <location>
        <position position="386"/>
    </location>
</feature>
<feature type="cross-link" description="Glycyl lysine isopeptide (Lys-Gly) (interchain with G-Cter in SUMO2)" evidence="16 17 18 19">
    <location>
        <position position="453"/>
    </location>
</feature>
<feature type="cross-link" description="Glycyl lysine isopeptide (Lys-Gly) (interchain with G-Cter in SUMO2)" evidence="19">
    <location>
        <position position="469"/>
    </location>
</feature>
<feature type="cross-link" description="Glycyl lysine isopeptide (Lys-Gly) (interchain with G-Cter in SUMO2)" evidence="16 17 18 19">
    <location>
        <position position="569"/>
    </location>
</feature>
<feature type="cross-link" description="Glycyl lysine isopeptide (Lys-Gly) (interchain with G-Cter in SUMO2)" evidence="19">
    <location>
        <position position="871"/>
    </location>
</feature>
<feature type="cross-link" description="Glycyl lysine isopeptide (Lys-Gly) (interchain with G-Cter in SUMO2)" evidence="19">
    <location>
        <position position="879"/>
    </location>
</feature>
<feature type="cross-link" description="Glycyl lysine isopeptide (Lys-Gly) (interchain with G-Cter in SUMO2)" evidence="19">
    <location>
        <position position="887"/>
    </location>
</feature>
<feature type="cross-link" description="Glycyl lysine isopeptide (Lys-Gly) (interchain with G-Cter in SUMO2)" evidence="19">
    <location>
        <position position="935"/>
    </location>
</feature>
<feature type="cross-link" description="Glycyl lysine isopeptide (Lys-Gly) (interchain with G-Cter in SUMO2)" evidence="19">
    <location>
        <position position="948"/>
    </location>
</feature>
<feature type="cross-link" description="Glycyl lysine isopeptide (Lys-Gly) (interchain with G-Cter in SUMO2)" evidence="19">
    <location>
        <position position="991"/>
    </location>
</feature>
<feature type="cross-link" description="Glycyl lysine isopeptide (Lys-Gly) (interchain with G-Cter in SUMO2)" evidence="19">
    <location>
        <position position="1019"/>
    </location>
</feature>
<feature type="cross-link" description="Glycyl lysine isopeptide (Lys-Gly) (interchain with G-Cter in SUMO2)" evidence="19">
    <location>
        <position position="1042"/>
    </location>
</feature>
<feature type="cross-link" description="Glycyl lysine isopeptide (Lys-Gly) (interchain with G-Cter in SUMO2)" evidence="16 19">
    <location>
        <position position="1046"/>
    </location>
</feature>
<feature type="cross-link" description="Glycyl lysine isopeptide (Lys-Gly) (interchain with G-Cter in SUMO2)" evidence="19">
    <location>
        <position position="1066"/>
    </location>
</feature>
<feature type="splice variant" id="VSP_045202" description="In isoform 2." evidence="6">
    <location>
        <begin position="1"/>
        <end position="522"/>
    </location>
</feature>
<feature type="splice variant" id="VSP_057401" description="In isoform 3." evidence="5">
    <original>YDYGYVCVEFSLLEDAIGCMEANQG</original>
    <variation>NSNDPGQRSYPGVCIKPGFLVLQTM</variation>
    <location>
        <begin position="496"/>
        <end position="520"/>
    </location>
</feature>
<feature type="splice variant" id="VSP_057402" description="In isoform 3." evidence="5">
    <location>
        <begin position="521"/>
        <end position="1123"/>
    </location>
</feature>
<feature type="sequence variant" id="VAR_014226" description="In a non-small cell lung cancer cell line; dbSNP:rs61731329." evidence="4">
    <original>S</original>
    <variation>F</variation>
    <location>
        <position position="353"/>
    </location>
</feature>
<feature type="sequence variant" id="VAR_052216" description="In dbSNP:rs34707170.">
    <original>N</original>
    <variation>T</variation>
    <location>
        <position position="721"/>
    </location>
</feature>
<feature type="sequence conflict" description="In Ref. 2; AAC21578." evidence="7" ref="2">
    <original>R</original>
    <variation>K</variation>
    <location>
        <position position="642"/>
    </location>
</feature>
<feature type="sequence conflict" description="In Ref. 1; AAC05826." evidence="7" ref="1">
    <original>A</original>
    <variation>V</variation>
    <location>
        <position position="710"/>
    </location>
</feature>
<feature type="sequence conflict" description="In Ref. 1; AAC05826." evidence="7" ref="1">
    <original>T</original>
    <variation>S</variation>
    <location>
        <position position="796"/>
    </location>
</feature>
<protein>
    <recommendedName>
        <fullName>RNA-binding protein 6</fullName>
    </recommendedName>
    <alternativeName>
        <fullName>Lung cancer antigen NY-LU-12</fullName>
    </alternativeName>
    <alternativeName>
        <fullName>Protein G16</fullName>
    </alternativeName>
    <alternativeName>
        <fullName>RNA-binding motif protein 6</fullName>
    </alternativeName>
    <alternativeName>
        <fullName>RNA-binding protein DEF-3</fullName>
    </alternativeName>
</protein>
<sequence length="1123" mass="128644">MWGDSRPANRTGPFRGSQEERFAPGWNRDYPPPPLKSHAQERHSGNFPGRDSLPFDFQGHSGPPFANVEEHSFSYGARDGPHGDYRGGEGPGHDFRGGDFSSSDFQSRDSSQLDFRGRDIHSGDFRDREGPPMDYRGGDGTSMDYRGREAPHMNYRDRDAHAVDFRGRDAPPSDFRGRGTYDLDFRGRDGSHADFRGRDLSDLDFRAREQSRSDFRNRDVSDLDFRDKDGTQVDFRGRGSGTTDLDFRDRDTPHSDFRGRHRSRTDQDFRGREMGSCMEFKDREMPPVDPNILDYIQPSTQDREHSGMNVNRREESTHDHTIERPAFGIQKGEFEHSETREGETQGVAFEHESPADFQNSQSPVQDQDKSQLSGREEQSSDAGLFKEEGGLDFLGRQDTDYRSMEYRDVDHRLPGSQMFGYGQSKSFPEGKTARDAQRDLQDQDYRTGPSEEKPSRLIRLSGVPEDATKEEILNAFRTPDGMPVKNLQLKEYNTGYDYGYVCVEFSLLEDAIGCMEANQGTLMIQDKEVTLEYVSSLDFWYCKRCKANIGGHRSSCSFCKNPREVTEAKQELITYPQPQKTSIPAPLEKQPNQPLRPADKEPEPRKREEGQESRLGHQKREAERYLPPSRREGPTFRRDRERESWSGETRQDGESKTIMLKRIYRSTPPEVIVEVLEPYVRLTTANVRIIKNRTGPMGHTYGFIDLDSHAEALRVVKILQNLDPPFSIDGKMVAVNLATGKRRNDSGDHSDHMHYYQGKKYFRDRRGGGRNSDWSSDTNRQGQQSSSDCYIYDSATGYYYDPLAGTYYDPNTQQEVYVPQDPGLPEEEEIKEKKPTSQGKSSSKKEMSKRDGKEKKDRGVTRFQENASEGKAPAEDVFKKPLPPTVKKEESPPPPKVVNPLIGLLGEYGGDSDYEEEEEEEQTPPPQPRTAQPQKREEQTKKENEEDKLTDWNKLACLLCRRQFPNKEVLIKHQQLSDLHKQNLEIHRKIKQSEQELAYLERREREGKFKGRGNDRREKLQSFDSPERKRIKYSRETDSDRKLVDKEDIDTSSKGGCVQQATGWRKGTGLGYGHPGLASSEEAEGRMRGPSVGASGRTSKRQSNETYRDAVRRVMFARYKELD</sequence>
<comment type="function">
    <text>Specifically binds poly(G) RNA homopolymers in vitro.</text>
</comment>
<comment type="subunit">
    <text>May interact with FAM168B.</text>
</comment>
<comment type="interaction">
    <interactant intactId="EBI-2692323">
        <id>P78332</id>
    </interactant>
    <interactant intactId="EBI-10177695">
        <id>P26641-2</id>
        <label>EEF1G</label>
    </interactant>
    <organismsDiffer>false</organismsDiffer>
    <experiments>3</experiments>
</comment>
<comment type="interaction">
    <interactant intactId="EBI-14150298">
        <id>P78332-2</id>
    </interactant>
    <interactant intactId="EBI-739717">
        <id>Q15555</id>
        <label>MAPRE2</label>
    </interactant>
    <organismsDiffer>false</organismsDiffer>
    <experiments>3</experiments>
</comment>
<comment type="subcellular location">
    <subcellularLocation>
        <location evidence="7">Nucleus</location>
    </subcellularLocation>
</comment>
<comment type="alternative products">
    <event type="alternative splicing"/>
    <isoform>
        <id>P78332-1</id>
        <name>1</name>
        <sequence type="displayed"/>
    </isoform>
    <isoform>
        <id>P78332-2</id>
        <name>2</name>
        <sequence type="described" ref="VSP_045202"/>
    </isoform>
    <isoform>
        <id>P78332-3</id>
        <name>3</name>
        <sequence type="described" ref="VSP_057401 VSP_057402"/>
    </isoform>
</comment>
<comment type="tissue specificity">
    <text>Ubiquitous in adults.</text>
</comment>
<evidence type="ECO:0000255" key="1">
    <source>
        <dbReference type="PROSITE-ProRule" id="PRU00092"/>
    </source>
</evidence>
<evidence type="ECO:0000255" key="2">
    <source>
        <dbReference type="PROSITE-ProRule" id="PRU00176"/>
    </source>
</evidence>
<evidence type="ECO:0000256" key="3">
    <source>
        <dbReference type="SAM" id="MobiDB-lite"/>
    </source>
</evidence>
<evidence type="ECO:0000269" key="4">
    <source>
    </source>
</evidence>
<evidence type="ECO:0000303" key="5">
    <source>
    </source>
</evidence>
<evidence type="ECO:0000303" key="6">
    <source>
    </source>
</evidence>
<evidence type="ECO:0000305" key="7"/>
<evidence type="ECO:0007744" key="8">
    <source>
    </source>
</evidence>
<evidence type="ECO:0007744" key="9">
    <source>
    </source>
</evidence>
<evidence type="ECO:0007744" key="10">
    <source>
    </source>
</evidence>
<evidence type="ECO:0007744" key="11">
    <source>
    </source>
</evidence>
<evidence type="ECO:0007744" key="12">
    <source>
    </source>
</evidence>
<evidence type="ECO:0007744" key="13">
    <source>
    </source>
</evidence>
<evidence type="ECO:0007744" key="14">
    <source>
    </source>
</evidence>
<evidence type="ECO:0007744" key="15">
    <source>
    </source>
</evidence>
<evidence type="ECO:0007744" key="16">
    <source>
    </source>
</evidence>
<evidence type="ECO:0007744" key="17">
    <source>
    </source>
</evidence>
<evidence type="ECO:0007744" key="18">
    <source>
    </source>
</evidence>
<evidence type="ECO:0007744" key="19">
    <source>
    </source>
</evidence>
<keyword id="KW-0025">Alternative splicing</keyword>
<keyword id="KW-1017">Isopeptide bond</keyword>
<keyword id="KW-0539">Nucleus</keyword>
<keyword id="KW-0597">Phosphoprotein</keyword>
<keyword id="KW-1267">Proteomics identification</keyword>
<keyword id="KW-1185">Reference proteome</keyword>
<keyword id="KW-0694">RNA-binding</keyword>
<keyword id="KW-0832">Ubl conjugation</keyword>
<proteinExistence type="evidence at protein level"/>
<name>RBM6_HUMAN</name>
<dbReference type="EMBL" id="AF042857">
    <property type="protein sequence ID" value="AAC05826.1"/>
    <property type="molecule type" value="mRNA"/>
</dbReference>
<dbReference type="EMBL" id="AF069517">
    <property type="protein sequence ID" value="AAC21578.1"/>
    <property type="molecule type" value="mRNA"/>
</dbReference>
<dbReference type="EMBL" id="AF091264">
    <property type="protein sequence ID" value="AAD04160.1"/>
    <property type="molecule type" value="mRNA"/>
</dbReference>
<dbReference type="EMBL" id="U50839">
    <property type="protein sequence ID" value="AAC35207.1"/>
    <property type="molecule type" value="mRNA"/>
</dbReference>
<dbReference type="EMBL" id="AK303371">
    <property type="protein sequence ID" value="BAG64428.1"/>
    <property type="molecule type" value="mRNA"/>
</dbReference>
<dbReference type="EMBL" id="AC104450">
    <property type="status" value="NOT_ANNOTATED_CDS"/>
    <property type="molecule type" value="Genomic_DNA"/>
</dbReference>
<dbReference type="EMBL" id="AC105935">
    <property type="status" value="NOT_ANNOTATED_CDS"/>
    <property type="molecule type" value="Genomic_DNA"/>
</dbReference>
<dbReference type="EMBL" id="BC046643">
    <property type="protein sequence ID" value="AAH46643.1"/>
    <property type="molecule type" value="mRNA"/>
</dbReference>
<dbReference type="CCDS" id="CCDS2809.1">
    <molecule id="P78332-1"/>
</dbReference>
<dbReference type="CCDS" id="CCDS54586.1">
    <molecule id="P78332-2"/>
</dbReference>
<dbReference type="RefSeq" id="NP_001161054.1">
    <molecule id="P78332-2"/>
    <property type="nucleotide sequence ID" value="NM_001167582.2"/>
</dbReference>
<dbReference type="RefSeq" id="NP_001336119.1">
    <molecule id="P78332-2"/>
    <property type="nucleotide sequence ID" value="NM_001349190.2"/>
</dbReference>
<dbReference type="RefSeq" id="NP_001336120.1">
    <molecule id="P78332-2"/>
    <property type="nucleotide sequence ID" value="NM_001349191.2"/>
</dbReference>
<dbReference type="RefSeq" id="NP_001336121.1">
    <molecule id="P78332-2"/>
    <property type="nucleotide sequence ID" value="NM_001349192.2"/>
</dbReference>
<dbReference type="RefSeq" id="NP_001336122.1">
    <molecule id="P78332-2"/>
    <property type="nucleotide sequence ID" value="NM_001349193.2"/>
</dbReference>
<dbReference type="RefSeq" id="NP_005768.1">
    <molecule id="P78332-1"/>
    <property type="nucleotide sequence ID" value="NM_005777.3"/>
</dbReference>
<dbReference type="RefSeq" id="XP_005264843.1">
    <property type="nucleotide sequence ID" value="XM_005264786.1"/>
</dbReference>
<dbReference type="RefSeq" id="XP_005264844.1">
    <property type="nucleotide sequence ID" value="XM_005264787.2"/>
</dbReference>
<dbReference type="RefSeq" id="XP_016860988.1">
    <property type="nucleotide sequence ID" value="XM_017005499.1"/>
</dbReference>
<dbReference type="RefSeq" id="XP_016860989.1">
    <property type="nucleotide sequence ID" value="XM_017005500.1"/>
</dbReference>
<dbReference type="RefSeq" id="XP_016860990.1">
    <property type="nucleotide sequence ID" value="XM_017005501.1"/>
</dbReference>
<dbReference type="RefSeq" id="XP_016860991.1">
    <property type="nucleotide sequence ID" value="XM_017005502.1"/>
</dbReference>
<dbReference type="RefSeq" id="XP_047303087.1">
    <molecule id="P78332-1"/>
    <property type="nucleotide sequence ID" value="XM_047447131.1"/>
</dbReference>
<dbReference type="RefSeq" id="XP_047303090.1">
    <molecule id="P78332-2"/>
    <property type="nucleotide sequence ID" value="XM_047447134.1"/>
</dbReference>
<dbReference type="RefSeq" id="XP_047303091.1">
    <molecule id="P78332-2"/>
    <property type="nucleotide sequence ID" value="XM_047447135.1"/>
</dbReference>
<dbReference type="RefSeq" id="XP_054200809.1">
    <molecule id="P78332-1"/>
    <property type="nucleotide sequence ID" value="XM_054344834.1"/>
</dbReference>
<dbReference type="RefSeq" id="XP_054200815.1">
    <molecule id="P78332-2"/>
    <property type="nucleotide sequence ID" value="XM_054344840.1"/>
</dbReference>
<dbReference type="RefSeq" id="XP_054200816.1">
    <molecule id="P78332-2"/>
    <property type="nucleotide sequence ID" value="XM_054344841.1"/>
</dbReference>
<dbReference type="BioGRID" id="115479">
    <property type="interactions" value="135"/>
</dbReference>
<dbReference type="FunCoup" id="P78332">
    <property type="interactions" value="2631"/>
</dbReference>
<dbReference type="IntAct" id="P78332">
    <property type="interactions" value="106"/>
</dbReference>
<dbReference type="MINT" id="P78332"/>
<dbReference type="STRING" id="9606.ENSP00000266022"/>
<dbReference type="GlyGen" id="P78332">
    <property type="glycosylation" value="4 sites, 1 N-linked glycan (1 site), 1 O-linked glycan (3 sites)"/>
</dbReference>
<dbReference type="iPTMnet" id="P78332"/>
<dbReference type="PhosphoSitePlus" id="P78332"/>
<dbReference type="BioMuta" id="RBM6"/>
<dbReference type="DMDM" id="116242749"/>
<dbReference type="jPOST" id="P78332"/>
<dbReference type="MassIVE" id="P78332"/>
<dbReference type="PaxDb" id="9606-ENSP00000266022"/>
<dbReference type="PeptideAtlas" id="P78332"/>
<dbReference type="ProteomicsDB" id="5671"/>
<dbReference type="ProteomicsDB" id="57570">
    <molecule id="P78332-1"/>
</dbReference>
<dbReference type="ProteomicsDB" id="69630"/>
<dbReference type="Pumba" id="P78332"/>
<dbReference type="Antibodypedia" id="13824">
    <property type="antibodies" value="181 antibodies from 27 providers"/>
</dbReference>
<dbReference type="DNASU" id="10180"/>
<dbReference type="Ensembl" id="ENST00000266022.9">
    <molecule id="P78332-1"/>
    <property type="protein sequence ID" value="ENSP00000266022.4"/>
    <property type="gene ID" value="ENSG00000004534.15"/>
</dbReference>
<dbReference type="Ensembl" id="ENST00000422955.5">
    <molecule id="P78332-2"/>
    <property type="protein sequence ID" value="ENSP00000392939.1"/>
    <property type="gene ID" value="ENSG00000004534.15"/>
</dbReference>
<dbReference type="Ensembl" id="ENST00000425608.5">
    <molecule id="P78332-3"/>
    <property type="protein sequence ID" value="ENSP00000408665.1"/>
    <property type="gene ID" value="ENSG00000004534.15"/>
</dbReference>
<dbReference type="Ensembl" id="ENST00000442092.5">
    <molecule id="P78332-2"/>
    <property type="protein sequence ID" value="ENSP00000393530.1"/>
    <property type="gene ID" value="ENSG00000004534.15"/>
</dbReference>
<dbReference type="GeneID" id="10180"/>
<dbReference type="KEGG" id="hsa:10180"/>
<dbReference type="MANE-Select" id="ENST00000266022.9">
    <property type="protein sequence ID" value="ENSP00000266022.4"/>
    <property type="RefSeq nucleotide sequence ID" value="NM_005777.3"/>
    <property type="RefSeq protein sequence ID" value="NP_005768.1"/>
</dbReference>
<dbReference type="UCSC" id="uc003cyc.4">
    <molecule id="P78332-1"/>
    <property type="organism name" value="human"/>
</dbReference>
<dbReference type="UCSC" id="uc062jzu.1">
    <property type="organism name" value="human"/>
</dbReference>
<dbReference type="AGR" id="HGNC:9903"/>
<dbReference type="CTD" id="10180"/>
<dbReference type="DisGeNET" id="10180"/>
<dbReference type="GeneCards" id="RBM6"/>
<dbReference type="HGNC" id="HGNC:9903">
    <property type="gene designation" value="RBM6"/>
</dbReference>
<dbReference type="HPA" id="ENSG00000004534">
    <property type="expression patterns" value="Low tissue specificity"/>
</dbReference>
<dbReference type="MIM" id="606886">
    <property type="type" value="gene"/>
</dbReference>
<dbReference type="neXtProt" id="NX_P78332"/>
<dbReference type="OpenTargets" id="ENSG00000004534"/>
<dbReference type="PharmGKB" id="PA34268"/>
<dbReference type="VEuPathDB" id="HostDB:ENSG00000004534"/>
<dbReference type="eggNOG" id="KOG0154">
    <property type="taxonomic scope" value="Eukaryota"/>
</dbReference>
<dbReference type="GeneTree" id="ENSGT00940000157976"/>
<dbReference type="HOGENOM" id="CLU_010527_0_0_1"/>
<dbReference type="InParanoid" id="P78332"/>
<dbReference type="OMA" id="REVGSCM"/>
<dbReference type="OrthoDB" id="29221at2759"/>
<dbReference type="PAN-GO" id="P78332">
    <property type="GO annotations" value="3 GO annotations based on evolutionary models"/>
</dbReference>
<dbReference type="PhylomeDB" id="P78332"/>
<dbReference type="TreeFam" id="TF315789"/>
<dbReference type="PathwayCommons" id="P78332"/>
<dbReference type="SignaLink" id="P78332"/>
<dbReference type="BioGRID-ORCS" id="10180">
    <property type="hits" value="18 hits in 1166 CRISPR screens"/>
</dbReference>
<dbReference type="ChiTaRS" id="RBM6">
    <property type="organism name" value="human"/>
</dbReference>
<dbReference type="GeneWiki" id="RBM6"/>
<dbReference type="GenomeRNAi" id="10180"/>
<dbReference type="Pharos" id="P78332">
    <property type="development level" value="Tbio"/>
</dbReference>
<dbReference type="PRO" id="PR:P78332"/>
<dbReference type="Proteomes" id="UP000005640">
    <property type="component" value="Chromosome 3"/>
</dbReference>
<dbReference type="RNAct" id="P78332">
    <property type="molecule type" value="protein"/>
</dbReference>
<dbReference type="Bgee" id="ENSG00000004534">
    <property type="expression patterns" value="Expressed in lower esophagus mucosa and 204 other cell types or tissues"/>
</dbReference>
<dbReference type="ExpressionAtlas" id="P78332">
    <property type="expression patterns" value="baseline and differential"/>
</dbReference>
<dbReference type="GO" id="GO:0005634">
    <property type="term" value="C:nucleus"/>
    <property type="evidence" value="ECO:0000318"/>
    <property type="project" value="GO_Central"/>
</dbReference>
<dbReference type="GO" id="GO:0003677">
    <property type="term" value="F:DNA binding"/>
    <property type="evidence" value="ECO:0000304"/>
    <property type="project" value="ProtInc"/>
</dbReference>
<dbReference type="GO" id="GO:0003723">
    <property type="term" value="F:RNA binding"/>
    <property type="evidence" value="ECO:0007005"/>
    <property type="project" value="UniProtKB"/>
</dbReference>
<dbReference type="GO" id="GO:0000398">
    <property type="term" value="P:mRNA splicing, via spliceosome"/>
    <property type="evidence" value="ECO:0000318"/>
    <property type="project" value="GO_Central"/>
</dbReference>
<dbReference type="GO" id="GO:0006396">
    <property type="term" value="P:RNA processing"/>
    <property type="evidence" value="ECO:0000304"/>
    <property type="project" value="ProtInc"/>
</dbReference>
<dbReference type="CDD" id="cd16163">
    <property type="entry name" value="OCRE_RBM6"/>
    <property type="match status" value="1"/>
</dbReference>
<dbReference type="CDD" id="cd12314">
    <property type="entry name" value="RRM1_RBM6"/>
    <property type="match status" value="1"/>
</dbReference>
<dbReference type="CDD" id="cd12563">
    <property type="entry name" value="RRM2_RBM6"/>
    <property type="match status" value="1"/>
</dbReference>
<dbReference type="FunFam" id="2.160.20.80:FF:000004">
    <property type="entry name" value="RNA-binding motif protein 6"/>
    <property type="match status" value="1"/>
</dbReference>
<dbReference type="FunFam" id="3.30.70.330:FF:000304">
    <property type="entry name" value="RNA-binding protein 6 isoform X2"/>
    <property type="match status" value="1"/>
</dbReference>
<dbReference type="Gene3D" id="3.30.70.330">
    <property type="match status" value="2"/>
</dbReference>
<dbReference type="Gene3D" id="2.160.20.80">
    <property type="entry name" value="E3 ubiquitin-protein ligase SopA"/>
    <property type="match status" value="1"/>
</dbReference>
<dbReference type="InterPro" id="IPR000467">
    <property type="entry name" value="G_patch_dom"/>
</dbReference>
<dbReference type="InterPro" id="IPR012677">
    <property type="entry name" value="Nucleotide-bd_a/b_plait_sf"/>
</dbReference>
<dbReference type="InterPro" id="IPR041591">
    <property type="entry name" value="OCRE"/>
</dbReference>
<dbReference type="InterPro" id="IPR035979">
    <property type="entry name" value="RBD_domain_sf"/>
</dbReference>
<dbReference type="InterPro" id="IPR035617">
    <property type="entry name" value="RBM6_OCRE"/>
</dbReference>
<dbReference type="InterPro" id="IPR034123">
    <property type="entry name" value="RBM6_RRM1"/>
</dbReference>
<dbReference type="InterPro" id="IPR034125">
    <property type="entry name" value="RBM6_RRM2"/>
</dbReference>
<dbReference type="InterPro" id="IPR000504">
    <property type="entry name" value="RRM_dom"/>
</dbReference>
<dbReference type="PANTHER" id="PTHR13948">
    <property type="entry name" value="RNA-BINDING PROTEIN"/>
    <property type="match status" value="1"/>
</dbReference>
<dbReference type="PANTHER" id="PTHR13948:SF22">
    <property type="entry name" value="RNA-BINDING PROTEIN 6"/>
    <property type="match status" value="1"/>
</dbReference>
<dbReference type="Pfam" id="PF01585">
    <property type="entry name" value="G-patch"/>
    <property type="match status" value="1"/>
</dbReference>
<dbReference type="Pfam" id="PF17780">
    <property type="entry name" value="OCRE"/>
    <property type="match status" value="1"/>
</dbReference>
<dbReference type="SMART" id="SM00443">
    <property type="entry name" value="G_patch"/>
    <property type="match status" value="1"/>
</dbReference>
<dbReference type="SMART" id="SM00360">
    <property type="entry name" value="RRM"/>
    <property type="match status" value="2"/>
</dbReference>
<dbReference type="SUPFAM" id="SSF141571">
    <property type="entry name" value="Pentapeptide repeat-like"/>
    <property type="match status" value="1"/>
</dbReference>
<dbReference type="SUPFAM" id="SSF54928">
    <property type="entry name" value="RNA-binding domain, RBD"/>
    <property type="match status" value="2"/>
</dbReference>
<dbReference type="PROSITE" id="PS50174">
    <property type="entry name" value="G_PATCH"/>
    <property type="match status" value="1"/>
</dbReference>
<dbReference type="PROSITE" id="PS50102">
    <property type="entry name" value="RRM"/>
    <property type="match status" value="1"/>
</dbReference>